<comment type="function">
    <molecule>Capsid protein VP1</molecule>
    <text evidence="2 15 31">Forms an icosahedral capsid of pseudo T=3 symmetry with capsid proteins VP2 and VP3 (By similarity). The capsid is 300 Angstroms in diameter, composed of 60 copies of each capsid protein and enclosing the viral positive strand RNA genome (By similarity). Capsid protein VP1 mainly forms the vertices of the capsid (By similarity). Capsid protein VP1, together with VP2, interacts with host cell receptor SCARB2 to provide virion attachment to target host cells. This attachment induces virion internalization predominantly through clathrin-dependent endocytosis (PubMed:20956521, PubMed:37417384). After binding to its receptor, the capsid undergoes conformational changes (By similarity). Capsid protein VP1 N-terminus (that contains an amphipathic alpha-helix) and capsid protein VP4 are externalized (By similarity). Together, they shape a pore in the host membrane through which viral genome is translocated to host cell cytoplasm (By similarity).</text>
</comment>
<comment type="function">
    <molecule>Capsid protein VP2</molecule>
    <text evidence="2 6">Forms an icosahedral capsid of pseudo T=3 symmetry with capsid proteins VP2 and VP3 (By similarity). The capsid is 300 Angstroms in diameter, composed of 60 copies of each capsid protein and enclosing the viral positive strand RNA genome (By similarity). Capsid protein VP2, together with VP1, interacts with host cell receptor SCARB2 to provide virion attachment to target host cells (By similarity).</text>
</comment>
<comment type="function">
    <molecule>Capsid protein VP3</molecule>
    <text evidence="2">Forms an icosahedral capsid of pseudo T=3 symmetry with capsid proteins VP2 and VP3 (By similarity). The capsid is 300 Angstroms in diameter, composed of 60 copies of each capsid protein and enclosing the viral positive strand RNA genome (By similarity).</text>
</comment>
<comment type="function">
    <molecule>Capsid protein VP4</molecule>
    <text evidence="2">Lies on the inner surface of the capsid shell (By similarity). After binding to the host receptor, the capsid undergoes conformational changes (By similarity). Capsid protein VP4 is released, Capsid protein VP1 N-terminus is externalized, and together, they shape a pore in the host membrane through which the viral genome is translocated into the host cell cytoplasm (By similarity).</text>
</comment>
<comment type="function">
    <molecule>Capsid protein VP0</molecule>
    <text evidence="2">Component of immature procapsids, which is cleaved into capsid proteins VP4 and VP2 after maturation (By similarity). Allows the capsid to remain inactive before the maturation step (By similarity).</text>
</comment>
<comment type="function">
    <molecule>Protease 2A</molecule>
    <text evidence="2 17 21 24">Cysteine protease that cleaves viral polyprotein and specific host proteins (By similarity). It is responsible for the autocatalytic cleavage between the P1 and P2 regions, which is the first cleavage occurring in the polyprotein (By similarity). Also cleaves the host translation initiation factor EIF4G1, in order to shut down the capped cellular mRNA translation (By similarity). Inhibits the host nucleus-cytoplasm protein and RNA trafficking by cleaving host members of the nuclear pores (By similarity). Counteracts stress granule formation probably by antagonizing its assembly or promoting its dissassembly (PubMed:30867299). Cleaves and inhibits host IFIH1/MDA5, thereby inhibiting the type-I IFN production and the establishment of the antiviral state (PubMed:24390337). Cleaves and inhibits host MAVS, thereby inhibiting the type-I IFN production and the establishment of the antiviral state (PubMed:24390337, PubMed:28253362).</text>
</comment>
<comment type="function">
    <molecule>Protein 2B</molecule>
    <text evidence="2 18">Plays an essential role in the virus replication cycle by acting as a viroporin. Creates a pore in the host endoplasmic reticulum and as a consequence releases Ca2+ in the cytoplasm of infected cell (By similarity). In turn, high levels of cytoplasmic calcium may trigger membrane trafficking and transport of viral ER-associated proteins to viroplasms, sites of viral genome replication (By similarity). Also activates the mitochondrial apoptotic pathway by activating host BAX (PubMed:27558414).</text>
</comment>
<comment type="function">
    <molecule>Protein 2C</molecule>
    <text evidence="2">Induces and associates with structural rearrangements of intracellular membranes. Displays RNA-binding, nucleotide binding and NTPase activities. May play a role in virion morphogenesis and viral RNA encapsidation by interacting with the capsid protein VP3.</text>
</comment>
<comment type="function">
    <molecule>Protein 3AB</molecule>
    <text evidence="2">Localizes the viral replication complex to the surface of membranous vesicles. Together with protein 3CD binds the Cis-Active RNA Element (CRE) which is involved in RNA synthesis initiation. Acts as a cofactor to stimulate the activity of 3D polymerase, maybe through a nucleid acid chaperone activity.</text>
</comment>
<comment type="function">
    <molecule>Protein 3A</molecule>
    <text evidence="2 34">Localizes the viral replication complex to the surface of membranous vesicles (By similarity). It inhibits host cell endoplasmic reticulum-to-Golgi apparatus transport and causes the disassembly of the Golgi complex, possibly through GBF1 interaction (By similarity). This would result in depletion of MHC, trail receptors and IFN receptors at the host cell surface (By similarity). Plays an essential role in viral RNA replication by recruiting ACBD3 and PI4KB at the viral replication sites, thereby allowing the formation of the rearranged membranous structures where viral replication takes place (Probable).</text>
</comment>
<comment type="function">
    <molecule>Viral protein genome-linked</molecule>
    <text evidence="2">Acts as a primer for viral RNA replication and remains covalently bound to viral genomic RNA. VPg is uridylylated prior to priming replication into VPg-pUpU. The oriI viral genomic sequence may act as a template for this. The VPg-pUpU is then used as primer on the genomic RNA poly(A) by the RNA-dependent RNA polymerase to replicate the viral genome. During genome replication, the VPg-RNA linkage is removed by the host TDP2, thereby accelerating replication. During the late stage of the replication cycle, host TDP2 is excluded from sites of viral RNA synthesis and encapsidation, allowing for the generation of progeny virions.</text>
</comment>
<comment type="function">
    <molecule>Protein 3CD</molecule>
    <text evidence="2 30">Involved in the viral replication complex and viral polypeptide maturation. It exhibits protease activity with a specificity and catalytic efficiency that is different from protease 3C. Protein 3CD lacks polymerase activity. Protein 3CD binds to the 5'UTR of the viral genome. Regulates host protein expression by interacting with host PPP1R15A to support viral replication (PubMed:34985336).</text>
</comment>
<comment type="function">
    <molecule>Protease 3C</molecule>
    <text evidence="2 4 16 17 19 22 23 24 27 28 29">Major viral protease that mediates proteolytic processing of the polyprotein (By similarity). Cleaves host EIF5B, contributing to host translation shutoff (By similarity). Also cleaves host PABPC1, contributing to host translation shutoff (By similarity). Disassembles host cytoplasmic stress granules by cleaving host G3BP1, although this effect is less prononced than the inhibition induced by protease 2A (PubMed:30006004, PubMed:30867299). Cleaves host RIGI and thus contributes to the inhibition of type I interferon production (PubMed:24390337). Cleaves host IRF7 and thus contributes to the inhibition of type I interferon production (PubMed:23175366). Cleaves host HNRNPA1 thereby increasing the translation of apoptosis protease activating factor APAF1, leading to apoptosis of the host cell (PubMed:31498791). Cleaves host NLRP1, triggers host N-glycine-mediated degradation of the autoinhibitory NLRP1 N-terminal fragment (PubMed:33410748). Cleaves and inactivates host GSDMD, preventing GSDMD-mediated pyroptosis (PubMed:28679757). Also promotes apoptosis in infected cell through cleaving of host PINX1, a telomere binding protein in order to facilitate viral release (PubMed:27847364). Impairs host PML-NBs production via PML cleavage and counter its antiviral activities (PubMed:34930370).</text>
</comment>
<comment type="function">
    <molecule>RNA-directed RNA polymerase</molecule>
    <text evidence="2 20">Replicates the viral genomic RNA on the surface of intracellular membranes. May form linear arrays of subunits that propagate along a strong head-to-tail interaction called interface-I. Covalently attaches UMP to a tyrosine of VPg, which is used to prime RNA synthesis. The positive stranded RNA genome is first replicated at virus induced membranous vesicles, creating a dsRNA genomic replication form. This dsRNA is then used as template to synthesize positive stranded RNA genomes. ss(+)RNA genomes are either translated, replicated or encapsidated. Facilitates the assembly of NLRP3 inflammasome complex and stimulates the cleavage of host pro-CASP1 and the secretion of IL-1beta (PubMed:28060938).</text>
</comment>
<comment type="catalytic activity">
    <molecule>Protein 2C</molecule>
    <reaction evidence="2">
        <text>a ribonucleoside 5'-triphosphate + H2O = a ribonucleoside 5'-diphosphate + phosphate + H(+)</text>
        <dbReference type="Rhea" id="RHEA:23680"/>
        <dbReference type="ChEBI" id="CHEBI:15377"/>
        <dbReference type="ChEBI" id="CHEBI:15378"/>
        <dbReference type="ChEBI" id="CHEBI:43474"/>
        <dbReference type="ChEBI" id="CHEBI:57930"/>
        <dbReference type="ChEBI" id="CHEBI:61557"/>
        <dbReference type="EC" id="3.6.1.15"/>
    </reaction>
</comment>
<comment type="catalytic activity">
    <molecule>Protease 2A</molecule>
    <reaction evidence="2">
        <text>Selective cleavage of Tyr-|-Gly bond in the picornavirus polyprotein.</text>
        <dbReference type="EC" id="3.4.22.29"/>
    </reaction>
</comment>
<comment type="catalytic activity">
    <molecule>RNA-directed RNA polymerase</molecule>
    <reaction evidence="9">
        <text>RNA(n) + a ribonucleoside 5'-triphosphate = RNA(n+1) + diphosphate</text>
        <dbReference type="Rhea" id="RHEA:21248"/>
        <dbReference type="Rhea" id="RHEA-COMP:14527"/>
        <dbReference type="Rhea" id="RHEA-COMP:17342"/>
        <dbReference type="ChEBI" id="CHEBI:33019"/>
        <dbReference type="ChEBI" id="CHEBI:61557"/>
        <dbReference type="ChEBI" id="CHEBI:140395"/>
        <dbReference type="EC" id="2.7.7.48"/>
    </reaction>
</comment>
<comment type="catalytic activity">
    <molecule>Protease 3C</molecule>
    <reaction evidence="11">
        <text>Selective cleavage of Gln-|-Gly bond in the poliovirus polyprotein. In other picornavirus reactions Glu may be substituted for Gln, and Ser or Thr for Gly.</text>
        <dbReference type="EC" id="3.4.22.28"/>
    </reaction>
</comment>
<comment type="cofactor">
    <molecule>RNA-directed RNA polymerase</molecule>
    <cofactor evidence="2">
        <name>Mg(2+)</name>
        <dbReference type="ChEBI" id="CHEBI:18420"/>
    </cofactor>
    <text evidence="2 5">Binds 2 magnesium ions that constitute a dinuclear catalytic metal center (By similarity). The magnesium ions are not prebound but only present for catalysis (By similarity). Requires the presence of 3CDpro or 3CPro (By similarity).</text>
</comment>
<comment type="activity regulation">
    <molecule>RNA-directed RNA polymerase</molecule>
    <text evidence="2">Replication or transcription is subject to high level of random mutations by the nucleotide analog ribavirin.</text>
</comment>
<comment type="subunit">
    <molecule>Capsid protein VP0</molecule>
    <text evidence="2">Interacts with capsid protein VP1 and capsid protein VP3 to form heterotrimeric protomers.</text>
</comment>
<comment type="subunit">
    <molecule>Capsid protein VP1</molecule>
    <text evidence="2 6 31">Interacts with capsid protein VP0, and capsid protein VP3 to form heterotrimeric protomers (By similarity). Five protomers subsequently associate to form pentamers which serve as building blocks for the capsid (By similarity). Interacts with capsid protein VP2, capsid protein VP3 and capsid protein VP4 following cleavage of capsid protein VP0 (By similarity). Interacts with host SCARB2 (By similarity). Interacts with host ARF6; this interaction mediates viral endocytosis (PubMed:37417384).</text>
</comment>
<comment type="subunit">
    <molecule>Capsid protein VP2</molecule>
    <text evidence="2 6">Interacts with capsid protein VP1 and capsid protein VP3 in the mature capsid (By similarity). Interacts with host SCARB2 (By similarity).</text>
</comment>
<comment type="subunit">
    <molecule>Capsid protein VP3</molecule>
    <text evidence="2">Interacts with capsid protein VP0 and capsid protein VP1 to form heterotrimeric protomers (By similarity). Five protomers subsequently associate to form pentamers which serve as building blocks for the capsid (By similarity). Interacts with capsid protein VP4 in the mature capsid (By similarity). Interacts with protein 2C; this interaction may be important for virion morphogenesis (By similarity).</text>
</comment>
<comment type="subunit">
    <molecule>Capsid protein VP4</molecule>
    <text evidence="2">Interacts with capsid protein VP1 and capsid protein VP3.</text>
</comment>
<comment type="subunit">
    <molecule>Protease 2A</molecule>
    <text evidence="7 32">Homodimer. Interacts with host SPOP; this interaction promotes protease 2A ubiquitination and subsequent degradation (PubMed:37796126).</text>
</comment>
<comment type="subunit">
    <molecule>Protein 2B</molecule>
    <text evidence="18 26">Interacts with host BAX; this interaction activates the mitochondrial apoptotic pathway. Interacts with host ILF2 (PubMed:31212927).</text>
</comment>
<comment type="subunit">
    <molecule>Protein 2C</molecule>
    <text evidence="2 13">Homohexamer; forms a hexameric ring structure with 6-fold symmetry characteristic of AAA+ ATPases (By similarity). Interacts (via N-terminus) with host RTN3 (via reticulon domain); this interaction is important for viral replication (PubMed:17182608). Interacts with capsid protein VP3; this interaction may be important for virion morphogenesis (By similarity).</text>
</comment>
<comment type="subunit">
    <molecule>Protein 3AB</molecule>
    <text evidence="2">Interacts with protein 3CD.</text>
</comment>
<comment type="subunit">
    <molecule>Protein 3A</molecule>
    <text evidence="2 6">Homodimer (By similarity). Interacts with host GBF1 (By similarity). Interacts (via GOLD domain) with host ACBD3 (via GOLD domain); this interaction allows the formation of a viral protein 3A/ACBD3 heterotetramer with a 2:2 stoichiometry, which will stimulate the recruitment of host PI4KB in order to synthesize PI4P at the viral RNA replication sites (By similarity).</text>
</comment>
<comment type="subunit">
    <molecule>Viral protein genome-linked</molecule>
    <text evidence="2">Interacts with RNA-directed RNA polymerase.</text>
</comment>
<comment type="subunit">
    <molecule>Protease 3C</molecule>
    <text evidence="7 14">Interacts with host IFIH1/MDA5; this interaction inhibits host IFIH1 (By similarity). Interacts with host RIGI (PubMed:20519382).</text>
</comment>
<comment type="subunit">
    <molecule>Protein 3CD</molecule>
    <text evidence="2 30">Interacts with protein 3AB and with RNA-directed RNA polymerase. Interacts with host PPP1R15A (PubMed:34985336).</text>
</comment>
<comment type="subunit">
    <molecule>RNA-directed RNA polymerase</molecule>
    <text evidence="2 20">Interacts with Viral protein genome-linked and with protein 3CD. Interacts with host NLRP3 (PubMed:28060938).</text>
</comment>
<comment type="subcellular location">
    <molecule>Capsid protein VP0</molecule>
    <subcellularLocation>
        <location>Virion</location>
    </subcellularLocation>
    <subcellularLocation>
        <location evidence="23">Host cytoplasm</location>
    </subcellularLocation>
</comment>
<comment type="subcellular location">
    <molecule>Capsid protein VP4</molecule>
    <subcellularLocation>
        <location>Virion</location>
    </subcellularLocation>
</comment>
<comment type="subcellular location">
    <molecule>Capsid protein VP2</molecule>
    <subcellularLocation>
        <location evidence="2">Virion</location>
    </subcellularLocation>
    <subcellularLocation>
        <location evidence="23">Host cytoplasm</location>
    </subcellularLocation>
</comment>
<comment type="subcellular location">
    <molecule>Capsid protein VP3</molecule>
    <subcellularLocation>
        <location evidence="2">Virion</location>
    </subcellularLocation>
    <subcellularLocation>
        <location evidence="23">Host cytoplasm</location>
    </subcellularLocation>
</comment>
<comment type="subcellular location">
    <molecule>Capsid protein VP1</molecule>
    <subcellularLocation>
        <location evidence="2">Virion</location>
    </subcellularLocation>
    <subcellularLocation>
        <location evidence="23">Host cytoplasm</location>
    </subcellularLocation>
</comment>
<comment type="subcellular location">
    <molecule>Protein 2B</molecule>
    <subcellularLocation>
        <location evidence="18 23">Host cytoplasmic vesicle membrane</location>
        <topology evidence="33">Peripheral membrane protein</topology>
        <orientation evidence="33">Cytoplasmic side</orientation>
    </subcellularLocation>
    <text>Probably localizes to the surface of intracellular membrane vesicles that are induced after virus infection as the site for viral RNA replication. These vesicles are derived from the endoplasmic reticulum.</text>
</comment>
<comment type="subcellular location">
    <molecule>Protein 2C</molecule>
    <subcellularLocation>
        <location evidence="23">Host cytoplasmic vesicle membrane</location>
        <topology evidence="33">Peripheral membrane protein</topology>
        <orientation evidence="33">Cytoplasmic side</orientation>
    </subcellularLocation>
    <text>Probably localizes to the surface of intracellular membrane vesicles that are induced after virus infection as the site for viral RNA replication. These vesicles are derived from the endoplasmic reticulum.</text>
</comment>
<comment type="subcellular location">
    <molecule>Protein 3A</molecule>
    <subcellularLocation>
        <location evidence="23">Host cytoplasmic vesicle membrane</location>
        <topology evidence="33">Peripheral membrane protein</topology>
        <orientation evidence="33">Cytoplasmic side</orientation>
    </subcellularLocation>
    <text>Probably localizes to the surface of intracellular membrane vesicles that are induced after virus infection as the site for viral RNA replication. These vesicles are derived from the endoplasmic reticulum.</text>
</comment>
<comment type="subcellular location">
    <molecule>Protein 3AB</molecule>
    <subcellularLocation>
        <location evidence="33">Host cytoplasmic vesicle membrane</location>
        <topology evidence="33">Peripheral membrane protein</topology>
        <orientation evidence="33">Cytoplasmic side</orientation>
    </subcellularLocation>
    <text>Probably localizes to the surface of intracellular membrane vesicles that are induced after virus infection as the site for viral RNA replication. These vesicles are derived from the endoplasmic reticulum.</text>
</comment>
<comment type="subcellular location">
    <molecule>Viral protein genome-linked</molecule>
    <subcellularLocation>
        <location evidence="2">Virion</location>
    </subcellularLocation>
    <subcellularLocation>
        <location evidence="23">Host cytoplasm</location>
    </subcellularLocation>
</comment>
<comment type="subcellular location">
    <molecule>Protease 3C</molecule>
    <subcellularLocation>
        <location evidence="19 23 29">Host cytoplasm</location>
    </subcellularLocation>
    <subcellularLocation>
        <location evidence="29">Host nucleus</location>
    </subcellularLocation>
</comment>
<comment type="subcellular location">
    <molecule>Protein 3CD</molecule>
    <subcellularLocation>
        <location evidence="2">Host nucleus</location>
    </subcellularLocation>
    <subcellularLocation>
        <location evidence="23">Host cytoplasm</location>
    </subcellularLocation>
    <subcellularLocation>
        <location evidence="33">Host cytoplasmic vesicle membrane</location>
        <topology evidence="33">Peripheral membrane protein</topology>
        <orientation evidence="33">Cytoplasmic side</orientation>
    </subcellularLocation>
    <text>Probably localizes to the surface of intracellular membrane vesicles that are induced after virus infection as the site for viral RNA replication. These vesicles are derived from the endoplasmic reticulum.</text>
</comment>
<comment type="subcellular location">
    <molecule>RNA-directed RNA polymerase</molecule>
    <subcellularLocation>
        <location evidence="33">Host cytoplasmic vesicle membrane</location>
        <topology evidence="33">Peripheral membrane protein</topology>
        <orientation evidence="33">Cytoplasmic side</orientation>
    </subcellularLocation>
    <subcellularLocation>
        <location evidence="20">Host cytoplasm</location>
    </subcellularLocation>
    <text>Probably localizes to the surface of intracellular membrane vesicles that are induced after virus infection as the site for viral RNA replication. These vesicles are derived from the endoplasmic reticulum.</text>
</comment>
<comment type="domain">
    <molecule>Protein 2C</molecule>
    <text evidence="1 2">The N-terminus has membrane-binding (By similarity). The N-terminus also displays RNA-binding properties (By similarity). The N-terminus is involved in oligomerization (By similarity). The central part contains an ATPase domain and a degenerate C4-type zinc-finger with only 3 cysteines (By similarity). The C-terminus is involved in RNA-binding (By similarity). The extreme C-terminus contains a region involved in oligomerization (By similarity).</text>
</comment>
<comment type="PTM">
    <molecule>Genome polyprotein</molecule>
    <text evidence="25">Specific enzymatic cleavages in vivo by the viral proteases yield processing intermediates and the mature proteins.</text>
</comment>
<comment type="PTM">
    <molecule>Capsid protein VP0</molecule>
    <text evidence="2">Myristoylation is required for the formation of pentamers during virus assembly. Further assembly of 12 pentamers and a molecule of genomic RNA generates the provirion.</text>
</comment>
<comment type="PTM">
    <molecule>Capsid protein VP0</molecule>
    <text evidence="2">During virion maturation, immature virions are rendered infectious following cleavage of VP0 into VP4 and VP2. This maturation seems to be an autocatalytic event triggered by the presence of RNA in the capsid and it is followed by a conformational change infectious virion.</text>
</comment>
<comment type="PTM">
    <molecule>Capsid protein VP4</molecule>
    <text evidence="2">Myristoylation is required during RNA encapsidation and formation of the mature virus particle.</text>
</comment>
<comment type="PTM">
    <molecule>Viral protein genome-linked</molecule>
    <text evidence="2">VPg is uridylylated by the polymerase into VPg-pUpU. This acts as a nucleotide-peptide primer for the genomic RNA replication.</text>
</comment>
<comment type="similarity">
    <text evidence="33">Belongs to the picornaviruses polyprotein family.</text>
</comment>
<proteinExistence type="evidence at protein level"/>
<accession>Q66478</accession>
<evidence type="ECO:0000250" key="1">
    <source>
        <dbReference type="UniProtKB" id="B9VUU3"/>
    </source>
</evidence>
<evidence type="ECO:0000250" key="2">
    <source>
        <dbReference type="UniProtKB" id="P03300"/>
    </source>
</evidence>
<evidence type="ECO:0000250" key="3">
    <source>
        <dbReference type="UniProtKB" id="P03301"/>
    </source>
</evidence>
<evidence type="ECO:0000250" key="4">
    <source>
        <dbReference type="UniProtKB" id="P03303"/>
    </source>
</evidence>
<evidence type="ECO:0000250" key="5">
    <source>
        <dbReference type="UniProtKB" id="P03313"/>
    </source>
</evidence>
<evidence type="ECO:0000250" key="6">
    <source>
        <dbReference type="UniProtKB" id="Q66479"/>
    </source>
</evidence>
<evidence type="ECO:0000250" key="7">
    <source>
        <dbReference type="UniProtKB" id="Q9QF31"/>
    </source>
</evidence>
<evidence type="ECO:0000255" key="8"/>
<evidence type="ECO:0000255" key="9">
    <source>
        <dbReference type="PROSITE-ProRule" id="PRU00539"/>
    </source>
</evidence>
<evidence type="ECO:0000255" key="10">
    <source>
        <dbReference type="PROSITE-ProRule" id="PRU00551"/>
    </source>
</evidence>
<evidence type="ECO:0000255" key="11">
    <source>
        <dbReference type="PROSITE-ProRule" id="PRU01222"/>
    </source>
</evidence>
<evidence type="ECO:0000256" key="12">
    <source>
        <dbReference type="SAM" id="MobiDB-lite"/>
    </source>
</evidence>
<evidence type="ECO:0000269" key="13">
    <source>
    </source>
</evidence>
<evidence type="ECO:0000269" key="14">
    <source>
    </source>
</evidence>
<evidence type="ECO:0000269" key="15">
    <source>
    </source>
</evidence>
<evidence type="ECO:0000269" key="16">
    <source>
    </source>
</evidence>
<evidence type="ECO:0000269" key="17">
    <source>
    </source>
</evidence>
<evidence type="ECO:0000269" key="18">
    <source>
    </source>
</evidence>
<evidence type="ECO:0000269" key="19">
    <source>
    </source>
</evidence>
<evidence type="ECO:0000269" key="20">
    <source>
    </source>
</evidence>
<evidence type="ECO:0000269" key="21">
    <source>
    </source>
</evidence>
<evidence type="ECO:0000269" key="22">
    <source>
    </source>
</evidence>
<evidence type="ECO:0000269" key="23">
    <source>
    </source>
</evidence>
<evidence type="ECO:0000269" key="24">
    <source>
    </source>
</evidence>
<evidence type="ECO:0000269" key="25">
    <source>
    </source>
</evidence>
<evidence type="ECO:0000269" key="26">
    <source>
    </source>
</evidence>
<evidence type="ECO:0000269" key="27">
    <source>
    </source>
</evidence>
<evidence type="ECO:0000269" key="28">
    <source>
    </source>
</evidence>
<evidence type="ECO:0000269" key="29">
    <source>
    </source>
</evidence>
<evidence type="ECO:0000269" key="30">
    <source>
    </source>
</evidence>
<evidence type="ECO:0000269" key="31">
    <source>
    </source>
</evidence>
<evidence type="ECO:0000269" key="32">
    <source>
    </source>
</evidence>
<evidence type="ECO:0000305" key="33"/>
<evidence type="ECO:0000305" key="34">
    <source>
    </source>
</evidence>
<keyword id="KW-1072">Activation of host autophagy by virus</keyword>
<keyword id="KW-0067">ATP-binding</keyword>
<keyword id="KW-0068">Autocatalytic cleavage</keyword>
<keyword id="KW-0167">Capsid protein</keyword>
<keyword id="KW-1165">Clathrin-mediated endocytosis of virus by host</keyword>
<keyword id="KW-0191">Covalent protein-RNA linkage</keyword>
<keyword id="KW-0235">DNA replication</keyword>
<keyword id="KW-1262">Eukaryotic host gene expression shutoff by virus</keyword>
<keyword id="KW-1193">Eukaryotic host translation shutoff by virus</keyword>
<keyword id="KW-0347">Helicase</keyword>
<keyword id="KW-1035">Host cytoplasm</keyword>
<keyword id="KW-1036">Host cytoplasmic vesicle</keyword>
<keyword id="KW-1190">Host gene expression shutoff by virus</keyword>
<keyword id="KW-1043">Host membrane</keyword>
<keyword id="KW-1192">Host mRNA suppression by virus</keyword>
<keyword id="KW-1048">Host nucleus</keyword>
<keyword id="KW-0945">Host-virus interaction</keyword>
<keyword id="KW-0378">Hydrolase</keyword>
<keyword id="KW-1090">Inhibition of host innate immune response by virus</keyword>
<keyword id="KW-1097">Inhibition of host MAVS by virus</keyword>
<keyword id="KW-1089">Inhibition of host MDA5 by virus</keyword>
<keyword id="KW-1099">Inhibition of host mRNA nuclear export by virus</keyword>
<keyword id="KW-1088">Inhibition of host RIG-I by virus</keyword>
<keyword id="KW-1113">Inhibition of host RLR pathway by virus</keyword>
<keyword id="KW-0407">Ion channel</keyword>
<keyword id="KW-0406">Ion transport</keyword>
<keyword id="KW-0449">Lipoprotein</keyword>
<keyword id="KW-0460">Magnesium</keyword>
<keyword id="KW-0472">Membrane</keyword>
<keyword id="KW-0479">Metal-binding</keyword>
<keyword id="KW-1119">Modulation of host cell apoptosis by virus</keyword>
<keyword id="KW-0519">Myristate</keyword>
<keyword id="KW-0547">Nucleotide-binding</keyword>
<keyword id="KW-0548">Nucleotidyltransferase</keyword>
<keyword id="KW-0597">Phosphoprotein</keyword>
<keyword id="KW-1172">Pore-mediated penetration of viral genome into host cell</keyword>
<keyword id="KW-0645">Protease</keyword>
<keyword id="KW-0677">Repeat</keyword>
<keyword id="KW-0694">RNA-binding</keyword>
<keyword id="KW-0696">RNA-directed RNA polymerase</keyword>
<keyword id="KW-1143">T=pseudo3 icosahedral capsid protein</keyword>
<keyword id="KW-0788">Thiol protease</keyword>
<keyword id="KW-0808">Transferase</keyword>
<keyword id="KW-0813">Transport</keyword>
<keyword id="KW-1161">Viral attachment to host cell</keyword>
<keyword id="KW-0899">Viral immunoevasion</keyword>
<keyword id="KW-1182">Viral ion channel</keyword>
<keyword id="KW-1162">Viral penetration into host cytoplasm</keyword>
<keyword id="KW-0693">Viral RNA replication</keyword>
<keyword id="KW-0946">Virion</keyword>
<keyword id="KW-1164">Virus endocytosis by host</keyword>
<keyword id="KW-1160">Virus entry into host cell</keyword>
<keyword id="KW-0862">Zinc</keyword>
<keyword id="KW-0863">Zinc-finger</keyword>
<dbReference type="EC" id="3.4.22.29" evidence="2"/>
<dbReference type="EC" id="3.6.1.15" evidence="2"/>
<dbReference type="EC" id="3.4.22.28" evidence="11"/>
<dbReference type="EC" id="2.7.7.48" evidence="9"/>
<dbReference type="EMBL" id="U22521">
    <property type="protein sequence ID" value="AAB39968.1"/>
    <property type="molecule type" value="Genomic_RNA"/>
</dbReference>
<dbReference type="SMR" id="Q66478"/>
<dbReference type="BindingDB" id="Q66478"/>
<dbReference type="ChEMBL" id="CHEMBL4295606"/>
<dbReference type="MEROPS" id="C03.014"/>
<dbReference type="MEROPS" id="C03.020"/>
<dbReference type="BRENDA" id="3.4.22.29">
    <property type="organism ID" value="9653"/>
</dbReference>
<dbReference type="Proteomes" id="UP000007709">
    <property type="component" value="Segment"/>
</dbReference>
<dbReference type="GO" id="GO:0044162">
    <property type="term" value="C:host cell cytoplasmic vesicle membrane"/>
    <property type="evidence" value="ECO:0007669"/>
    <property type="project" value="UniProtKB-SubCell"/>
</dbReference>
<dbReference type="GO" id="GO:0042025">
    <property type="term" value="C:host cell nucleus"/>
    <property type="evidence" value="ECO:0007669"/>
    <property type="project" value="UniProtKB-SubCell"/>
</dbReference>
<dbReference type="GO" id="GO:0016020">
    <property type="term" value="C:membrane"/>
    <property type="evidence" value="ECO:0007669"/>
    <property type="project" value="UniProtKB-KW"/>
</dbReference>
<dbReference type="GO" id="GO:0039618">
    <property type="term" value="C:T=pseudo3 icosahedral viral capsid"/>
    <property type="evidence" value="ECO:0007669"/>
    <property type="project" value="UniProtKB-KW"/>
</dbReference>
<dbReference type="GO" id="GO:0005524">
    <property type="term" value="F:ATP binding"/>
    <property type="evidence" value="ECO:0007669"/>
    <property type="project" value="UniProtKB-KW"/>
</dbReference>
<dbReference type="GO" id="GO:0016887">
    <property type="term" value="F:ATP hydrolysis activity"/>
    <property type="evidence" value="ECO:0007669"/>
    <property type="project" value="InterPro"/>
</dbReference>
<dbReference type="GO" id="GO:0015267">
    <property type="term" value="F:channel activity"/>
    <property type="evidence" value="ECO:0007669"/>
    <property type="project" value="UniProtKB-KW"/>
</dbReference>
<dbReference type="GO" id="GO:0004197">
    <property type="term" value="F:cysteine-type endopeptidase activity"/>
    <property type="evidence" value="ECO:0000314"/>
    <property type="project" value="UniProt"/>
</dbReference>
<dbReference type="GO" id="GO:0003723">
    <property type="term" value="F:RNA binding"/>
    <property type="evidence" value="ECO:0007669"/>
    <property type="project" value="UniProtKB-KW"/>
</dbReference>
<dbReference type="GO" id="GO:0003724">
    <property type="term" value="F:RNA helicase activity"/>
    <property type="evidence" value="ECO:0007669"/>
    <property type="project" value="InterPro"/>
</dbReference>
<dbReference type="GO" id="GO:0003968">
    <property type="term" value="F:RNA-directed RNA polymerase activity"/>
    <property type="evidence" value="ECO:0007669"/>
    <property type="project" value="UniProtKB-KW"/>
</dbReference>
<dbReference type="GO" id="GO:0005198">
    <property type="term" value="F:structural molecule activity"/>
    <property type="evidence" value="ECO:0007669"/>
    <property type="project" value="InterPro"/>
</dbReference>
<dbReference type="GO" id="GO:0008270">
    <property type="term" value="F:zinc ion binding"/>
    <property type="evidence" value="ECO:0007669"/>
    <property type="project" value="UniProtKB-KW"/>
</dbReference>
<dbReference type="GO" id="GO:0075512">
    <property type="term" value="P:clathrin-dependent endocytosis of virus by host cell"/>
    <property type="evidence" value="ECO:0007669"/>
    <property type="project" value="UniProtKB-KW"/>
</dbReference>
<dbReference type="GO" id="GO:0006260">
    <property type="term" value="P:DNA replication"/>
    <property type="evidence" value="ECO:0007669"/>
    <property type="project" value="UniProtKB-KW"/>
</dbReference>
<dbReference type="GO" id="GO:0006351">
    <property type="term" value="P:DNA-templated transcription"/>
    <property type="evidence" value="ECO:0007669"/>
    <property type="project" value="InterPro"/>
</dbReference>
<dbReference type="GO" id="GO:0034220">
    <property type="term" value="P:monoatomic ion transmembrane transport"/>
    <property type="evidence" value="ECO:0007669"/>
    <property type="project" value="UniProtKB-KW"/>
</dbReference>
<dbReference type="GO" id="GO:0006508">
    <property type="term" value="P:proteolysis"/>
    <property type="evidence" value="ECO:0007669"/>
    <property type="project" value="UniProtKB-KW"/>
</dbReference>
<dbReference type="GO" id="GO:0044694">
    <property type="term" value="P:symbiont genome entry into host cell via pore formation in plasma membrane"/>
    <property type="evidence" value="ECO:0007669"/>
    <property type="project" value="UniProtKB-KW"/>
</dbReference>
<dbReference type="GO" id="GO:0039520">
    <property type="term" value="P:symbiont-mediated activation of host autophagy"/>
    <property type="evidence" value="ECO:0000250"/>
    <property type="project" value="UniProtKB"/>
</dbReference>
<dbReference type="GO" id="GO:0052150">
    <property type="term" value="P:symbiont-mediated perturbation of host apoptosis"/>
    <property type="evidence" value="ECO:0007669"/>
    <property type="project" value="UniProtKB-KW"/>
</dbReference>
<dbReference type="GO" id="GO:0039545">
    <property type="term" value="P:symbiont-mediated suppression of host cytoplasmic pattern recognition receptor signaling pathway via inhibition of MAVS activity"/>
    <property type="evidence" value="ECO:0007669"/>
    <property type="project" value="UniProtKB-KW"/>
</dbReference>
<dbReference type="GO" id="GO:0039554">
    <property type="term" value="P:symbiont-mediated suppression of host cytoplasmic pattern recognition receptor signaling pathway via inhibition of MDA-5 activity"/>
    <property type="evidence" value="ECO:0007669"/>
    <property type="project" value="UniProtKB-KW"/>
</dbReference>
<dbReference type="GO" id="GO:0039540">
    <property type="term" value="P:symbiont-mediated suppression of host cytoplasmic pattern recognition receptor signaling pathway via inhibition of RIG-I activity"/>
    <property type="evidence" value="ECO:0007669"/>
    <property type="project" value="UniProtKB-KW"/>
</dbReference>
<dbReference type="GO" id="GO:0039522">
    <property type="term" value="P:symbiont-mediated suppression of host mRNA export from nucleus"/>
    <property type="evidence" value="ECO:0007669"/>
    <property type="project" value="UniProtKB-KW"/>
</dbReference>
<dbReference type="GO" id="GO:0052041">
    <property type="term" value="P:symbiont-mediated suppression of host programmed cell death"/>
    <property type="evidence" value="ECO:0000314"/>
    <property type="project" value="UniProt"/>
</dbReference>
<dbReference type="GO" id="GO:0039694">
    <property type="term" value="P:viral RNA genome replication"/>
    <property type="evidence" value="ECO:0007669"/>
    <property type="project" value="InterPro"/>
</dbReference>
<dbReference type="GO" id="GO:0019062">
    <property type="term" value="P:virion attachment to host cell"/>
    <property type="evidence" value="ECO:0007669"/>
    <property type="project" value="UniProtKB-KW"/>
</dbReference>
<dbReference type="CDD" id="cd23213">
    <property type="entry name" value="Enterovirus_RdRp"/>
    <property type="match status" value="1"/>
</dbReference>
<dbReference type="CDD" id="cd00205">
    <property type="entry name" value="rhv_like"/>
    <property type="match status" value="3"/>
</dbReference>
<dbReference type="FunFam" id="1.20.960.20:FF:000001">
    <property type="entry name" value="Genome polyprotein"/>
    <property type="match status" value="1"/>
</dbReference>
<dbReference type="FunFam" id="2.40.10.10:FF:000018">
    <property type="entry name" value="Genome polyprotein"/>
    <property type="match status" value="1"/>
</dbReference>
<dbReference type="FunFam" id="2.40.10.10:FF:000020">
    <property type="entry name" value="Genome polyprotein"/>
    <property type="match status" value="1"/>
</dbReference>
<dbReference type="FunFam" id="2.40.10.10:FF:000022">
    <property type="entry name" value="Genome polyprotein"/>
    <property type="match status" value="1"/>
</dbReference>
<dbReference type="FunFam" id="2.60.120.20:FF:000001">
    <property type="entry name" value="Genome polyprotein"/>
    <property type="match status" value="1"/>
</dbReference>
<dbReference type="FunFam" id="2.60.120.20:FF:000002">
    <property type="entry name" value="Genome polyprotein"/>
    <property type="match status" value="1"/>
</dbReference>
<dbReference type="FunFam" id="2.60.120.20:FF:000003">
    <property type="entry name" value="Genome polyprotein"/>
    <property type="match status" value="1"/>
</dbReference>
<dbReference type="FunFam" id="3.30.70.270:FF:000008">
    <property type="entry name" value="Genome polyprotein"/>
    <property type="match status" value="1"/>
</dbReference>
<dbReference type="FunFam" id="4.10.880.10:FF:000001">
    <property type="entry name" value="Genome polyprotein"/>
    <property type="match status" value="1"/>
</dbReference>
<dbReference type="FunFam" id="4.10.880.10:FF:000002">
    <property type="entry name" value="Genome polyprotein"/>
    <property type="match status" value="1"/>
</dbReference>
<dbReference type="Gene3D" id="1.20.960.20">
    <property type="match status" value="1"/>
</dbReference>
<dbReference type="Gene3D" id="2.60.120.20">
    <property type="match status" value="3"/>
</dbReference>
<dbReference type="Gene3D" id="3.30.70.270">
    <property type="match status" value="1"/>
</dbReference>
<dbReference type="Gene3D" id="6.10.20.20">
    <property type="entry name" value="Poliovirus 3A protein-like"/>
    <property type="match status" value="1"/>
</dbReference>
<dbReference type="Gene3D" id="4.10.880.10">
    <property type="entry name" value="Poliovirus 3D polymerase Domain 1 (Nucleotidyltransferase)"/>
    <property type="match status" value="2"/>
</dbReference>
<dbReference type="Gene3D" id="2.40.10.10">
    <property type="entry name" value="Trypsin-like serine proteases"/>
    <property type="match status" value="4"/>
</dbReference>
<dbReference type="InterPro" id="IPR003593">
    <property type="entry name" value="AAA+_ATPase"/>
</dbReference>
<dbReference type="InterPro" id="IPR043502">
    <property type="entry name" value="DNA/RNA_pol_sf"/>
</dbReference>
<dbReference type="InterPro" id="IPR000605">
    <property type="entry name" value="Helicase_SF3_ssDNA/RNA_vir"/>
</dbReference>
<dbReference type="InterPro" id="IPR014759">
    <property type="entry name" value="Helicase_SF3_ssRNA_vir"/>
</dbReference>
<dbReference type="InterPro" id="IPR027417">
    <property type="entry name" value="P-loop_NTPase"/>
</dbReference>
<dbReference type="InterPro" id="IPR014838">
    <property type="entry name" value="P3A"/>
</dbReference>
<dbReference type="InterPro" id="IPR036203">
    <property type="entry name" value="P3A_soluble_dom"/>
</dbReference>
<dbReference type="InterPro" id="IPR044067">
    <property type="entry name" value="PCV_3C_PRO"/>
</dbReference>
<dbReference type="InterPro" id="IPR000081">
    <property type="entry name" value="Peptidase_C3"/>
</dbReference>
<dbReference type="InterPro" id="IPR000199">
    <property type="entry name" value="Peptidase_C3A/C3B_picornavir"/>
</dbReference>
<dbReference type="InterPro" id="IPR009003">
    <property type="entry name" value="Peptidase_S1_PA"/>
</dbReference>
<dbReference type="InterPro" id="IPR043504">
    <property type="entry name" value="Peptidase_S1_PA_chymotrypsin"/>
</dbReference>
<dbReference type="InterPro" id="IPR003138">
    <property type="entry name" value="Pico_P1A"/>
</dbReference>
<dbReference type="InterPro" id="IPR002527">
    <property type="entry name" value="Pico_P2B"/>
</dbReference>
<dbReference type="InterPro" id="IPR001676">
    <property type="entry name" value="Picornavirus_capsid"/>
</dbReference>
<dbReference type="InterPro" id="IPR043128">
    <property type="entry name" value="Rev_trsase/Diguanyl_cyclase"/>
</dbReference>
<dbReference type="InterPro" id="IPR033703">
    <property type="entry name" value="Rhv-like"/>
</dbReference>
<dbReference type="InterPro" id="IPR001205">
    <property type="entry name" value="RNA-dir_pol_C"/>
</dbReference>
<dbReference type="InterPro" id="IPR007094">
    <property type="entry name" value="RNA-dir_pol_PSvirus"/>
</dbReference>
<dbReference type="InterPro" id="IPR029053">
    <property type="entry name" value="Viral_coat"/>
</dbReference>
<dbReference type="Pfam" id="PF08727">
    <property type="entry name" value="P3A"/>
    <property type="match status" value="1"/>
</dbReference>
<dbReference type="Pfam" id="PF00548">
    <property type="entry name" value="Peptidase_C3"/>
    <property type="match status" value="1"/>
</dbReference>
<dbReference type="Pfam" id="PF02226">
    <property type="entry name" value="Pico_P1A"/>
    <property type="match status" value="1"/>
</dbReference>
<dbReference type="Pfam" id="PF00947">
    <property type="entry name" value="Pico_P2A"/>
    <property type="match status" value="1"/>
</dbReference>
<dbReference type="Pfam" id="PF01552">
    <property type="entry name" value="Pico_P2B"/>
    <property type="match status" value="1"/>
</dbReference>
<dbReference type="Pfam" id="PF00680">
    <property type="entry name" value="RdRP_1"/>
    <property type="match status" value="1"/>
</dbReference>
<dbReference type="Pfam" id="PF00073">
    <property type="entry name" value="Rhv"/>
    <property type="match status" value="2"/>
</dbReference>
<dbReference type="Pfam" id="PF22663">
    <property type="entry name" value="Rhv_5"/>
    <property type="match status" value="1"/>
</dbReference>
<dbReference type="Pfam" id="PF00910">
    <property type="entry name" value="RNA_helicase"/>
    <property type="match status" value="1"/>
</dbReference>
<dbReference type="SMART" id="SM00382">
    <property type="entry name" value="AAA"/>
    <property type="match status" value="1"/>
</dbReference>
<dbReference type="SUPFAM" id="SSF56672">
    <property type="entry name" value="DNA/RNA polymerases"/>
    <property type="match status" value="1"/>
</dbReference>
<dbReference type="SUPFAM" id="SSF52540">
    <property type="entry name" value="P-loop containing nucleoside triphosphate hydrolases"/>
    <property type="match status" value="1"/>
</dbReference>
<dbReference type="SUPFAM" id="SSF88633">
    <property type="entry name" value="Positive stranded ssRNA viruses"/>
    <property type="match status" value="2"/>
</dbReference>
<dbReference type="SUPFAM" id="SSF89043">
    <property type="entry name" value="Soluble domain of poliovirus core protein 3a"/>
    <property type="match status" value="1"/>
</dbReference>
<dbReference type="SUPFAM" id="SSF50494">
    <property type="entry name" value="Trypsin-like serine proteases"/>
    <property type="match status" value="2"/>
</dbReference>
<dbReference type="PROSITE" id="PS51874">
    <property type="entry name" value="PCV_3C_PRO"/>
    <property type="match status" value="1"/>
</dbReference>
<dbReference type="PROSITE" id="PS50507">
    <property type="entry name" value="RDRP_SSRNA_POS"/>
    <property type="match status" value="1"/>
</dbReference>
<dbReference type="PROSITE" id="PS51218">
    <property type="entry name" value="SF3_HELICASE_2"/>
    <property type="match status" value="1"/>
</dbReference>
<feature type="initiator methionine" description="Removed; by host" evidence="2">
    <location>
        <position position="1"/>
    </location>
</feature>
<feature type="chain" id="PRO_0000426136" description="Genome polyprotein">
    <location>
        <begin position="2"/>
        <end position="2193"/>
    </location>
</feature>
<feature type="chain" id="PRO_0000426137" description="P1">
    <location>
        <begin position="2"/>
        <end position="862"/>
    </location>
</feature>
<feature type="chain" id="PRO_0000426138" description="Capsid protein VP0">
    <location>
        <begin position="2"/>
        <end position="323"/>
    </location>
</feature>
<feature type="chain" id="PRO_0000426139" description="Capsid protein VP4">
    <location>
        <begin position="2"/>
        <end position="69"/>
    </location>
</feature>
<feature type="chain" id="PRO_0000426140" description="Capsid protein VP2">
    <location>
        <begin position="70"/>
        <end position="323"/>
    </location>
</feature>
<feature type="chain" id="PRO_0000426141" description="Capsid protein VP3">
    <location>
        <begin position="324"/>
        <end position="565"/>
    </location>
</feature>
<feature type="chain" id="PRO_0000426142" description="Capsid protein VP1">
    <location>
        <begin position="566"/>
        <end position="862"/>
    </location>
</feature>
<feature type="chain" id="PRO_0000426143" description="P2">
    <location>
        <begin position="863"/>
        <end position="1440"/>
    </location>
</feature>
<feature type="chain" id="PRO_0000039485" description="Protease 2A">
    <location>
        <begin position="863"/>
        <end position="1012"/>
    </location>
</feature>
<feature type="chain" id="PRO_0000039486" description="Protein 2B">
    <location>
        <begin position="1013"/>
        <end position="1111"/>
    </location>
</feature>
<feature type="chain" id="PRO_0000039487" description="Protein 2C">
    <location>
        <begin position="1112"/>
        <end position="1440"/>
    </location>
</feature>
<feature type="chain" id="PRO_0000426144" description="P3">
    <location>
        <begin position="1441"/>
        <end position="2193"/>
    </location>
</feature>
<feature type="chain" id="PRO_0000426145" description="Protein 3AB">
    <location>
        <begin position="1441"/>
        <end position="1548"/>
    </location>
</feature>
<feature type="chain" id="PRO_0000039488" description="Protein 3A">
    <location>
        <begin position="1441"/>
        <end position="1526"/>
    </location>
</feature>
<feature type="chain" id="PRO_0000426146" description="Viral protein genome-linked">
    <location>
        <begin position="1527"/>
        <end position="1548"/>
    </location>
</feature>
<feature type="chain" id="PRO_0000426147" description="Protein 3CD">
    <location>
        <begin position="1549"/>
        <end position="2193"/>
    </location>
</feature>
<feature type="chain" id="PRO_0000426148" description="Protease 3C">
    <location>
        <begin position="1549"/>
        <end position="1731"/>
    </location>
</feature>
<feature type="chain" id="PRO_0000426149" description="RNA-directed RNA polymerase">
    <location>
        <begin position="1732"/>
        <end position="2193"/>
    </location>
</feature>
<feature type="topological domain" description="Cytoplasmic" evidence="8">
    <location>
        <begin position="2"/>
        <end position="1503"/>
    </location>
</feature>
<feature type="intramembrane region" evidence="8">
    <location>
        <begin position="1504"/>
        <end position="1519"/>
    </location>
</feature>
<feature type="topological domain" description="Cytoplasmic" evidence="8">
    <location>
        <begin position="1520"/>
        <end position="2193"/>
    </location>
</feature>
<feature type="domain" description="SF3 helicase" evidence="10">
    <location>
        <begin position="1216"/>
        <end position="1374"/>
    </location>
</feature>
<feature type="domain" description="Peptidase C3" evidence="11">
    <location>
        <begin position="1549"/>
        <end position="1727"/>
    </location>
</feature>
<feature type="domain" description="RdRp catalytic" evidence="9">
    <location>
        <begin position="1958"/>
        <end position="2073"/>
    </location>
</feature>
<feature type="zinc finger region" description="C4-type; degenerate" evidence="1">
    <location>
        <begin position="1381"/>
        <end position="1397"/>
    </location>
</feature>
<feature type="region of interest" description="Disordered" evidence="12">
    <location>
        <begin position="1"/>
        <end position="22"/>
    </location>
</feature>
<feature type="region of interest" description="Amphipathic alpha-helix" evidence="8">
    <location>
        <begin position="566"/>
        <end position="588"/>
    </location>
</feature>
<feature type="region of interest" description="Amphipathic alpha-helix" evidence="8">
    <location>
        <begin position="568"/>
        <end position="588"/>
    </location>
</feature>
<feature type="region of interest" description="Oligomerization" evidence="2">
    <location>
        <begin position="1112"/>
        <end position="1250"/>
    </location>
</feature>
<feature type="region of interest" description="Membrane-binding" evidence="2">
    <location>
        <begin position="1112"/>
        <end position="1184"/>
    </location>
</feature>
<feature type="region of interest" description="RNA-binding" evidence="2">
    <location>
        <begin position="1133"/>
        <end position="1137"/>
    </location>
</feature>
<feature type="region of interest" description="RNA-binding" evidence="2">
    <location>
        <begin position="1424"/>
        <end position="1431"/>
    </location>
</feature>
<feature type="region of interest" description="Oligomerization" evidence="2">
    <location>
        <begin position="1435"/>
        <end position="1440"/>
    </location>
</feature>
<feature type="active site" description="For protease 2A activity" evidence="2">
    <location>
        <position position="883"/>
    </location>
</feature>
<feature type="active site" description="For protease 2A activity" evidence="2">
    <location>
        <position position="901"/>
    </location>
</feature>
<feature type="active site" description="For protease 2A activity" evidence="2">
    <location>
        <position position="972"/>
    </location>
</feature>
<feature type="active site" description="For protease 3C activity" evidence="11">
    <location>
        <position position="1588"/>
    </location>
</feature>
<feature type="active site" description="For protease 3C activity" evidence="11">
    <location>
        <position position="1619"/>
    </location>
</feature>
<feature type="active site" description="For protease 3C activity" evidence="11">
    <location>
        <position position="1695"/>
    </location>
</feature>
<feature type="binding site" evidence="7">
    <location>
        <position position="918"/>
    </location>
    <ligand>
        <name>Zn(2+)</name>
        <dbReference type="ChEBI" id="CHEBI:29105"/>
        <label>1</label>
        <note>structural</note>
    </ligand>
</feature>
<feature type="binding site" evidence="7">
    <location>
        <position position="920"/>
    </location>
    <ligand>
        <name>Zn(2+)</name>
        <dbReference type="ChEBI" id="CHEBI:29105"/>
        <label>1</label>
        <note>structural</note>
    </ligand>
</feature>
<feature type="binding site" evidence="7">
    <location>
        <position position="978"/>
    </location>
    <ligand>
        <name>Zn(2+)</name>
        <dbReference type="ChEBI" id="CHEBI:29105"/>
        <label>1</label>
        <note>structural</note>
    </ligand>
</feature>
<feature type="binding site" evidence="7">
    <location>
        <position position="980"/>
    </location>
    <ligand>
        <name>Zn(2+)</name>
        <dbReference type="ChEBI" id="CHEBI:29105"/>
        <label>1</label>
        <note>structural</note>
    </ligand>
</feature>
<feature type="binding site" evidence="10">
    <location>
        <begin position="1240"/>
        <end position="1247"/>
    </location>
    <ligand>
        <name>ATP</name>
        <dbReference type="ChEBI" id="CHEBI:30616"/>
    </ligand>
</feature>
<feature type="binding site" evidence="1">
    <location>
        <position position="1381"/>
    </location>
    <ligand>
        <name>Zn(2+)</name>
        <dbReference type="ChEBI" id="CHEBI:29105"/>
        <label>2</label>
    </ligand>
</feature>
<feature type="binding site" evidence="1">
    <location>
        <position position="1392"/>
    </location>
    <ligand>
        <name>Zn(2+)</name>
        <dbReference type="ChEBI" id="CHEBI:29105"/>
        <label>2</label>
    </ligand>
</feature>
<feature type="binding site" evidence="1">
    <location>
        <position position="1397"/>
    </location>
    <ligand>
        <name>Zn(2+)</name>
        <dbReference type="ChEBI" id="CHEBI:29105"/>
        <label>2</label>
    </ligand>
</feature>
<feature type="binding site" evidence="2">
    <location>
        <position position="1964"/>
    </location>
    <ligand>
        <name>Mg(2+)</name>
        <dbReference type="ChEBI" id="CHEBI:18420"/>
        <label>1</label>
        <note>catalytic; for RdRp activity</note>
    </ligand>
</feature>
<feature type="binding site" evidence="2">
    <location>
        <position position="1964"/>
    </location>
    <ligand>
        <name>Mg(2+)</name>
        <dbReference type="ChEBI" id="CHEBI:18420"/>
        <label>2</label>
        <note>catalytic; for RdRp activity</note>
    </ligand>
</feature>
<feature type="binding site" evidence="2">
    <location>
        <position position="2060"/>
    </location>
    <ligand>
        <name>Mg(2+)</name>
        <dbReference type="ChEBI" id="CHEBI:18420"/>
        <label>1</label>
        <note>catalytic; for RdRp activity</note>
    </ligand>
</feature>
<feature type="binding site" evidence="2">
    <location>
        <position position="2060"/>
    </location>
    <ligand>
        <name>Mg(2+)</name>
        <dbReference type="ChEBI" id="CHEBI:18420"/>
        <label>2</label>
        <note>catalytic; for RdRp activity</note>
    </ligand>
</feature>
<feature type="site" description="Involved in the interaction with host RTN3" evidence="13">
    <location>
        <position position="25"/>
    </location>
</feature>
<feature type="site" description="Cleavage; by autolysis" evidence="25">
    <location>
        <begin position="69"/>
        <end position="70"/>
    </location>
</feature>
<feature type="site" description="Cleavage; by protease 3C" evidence="3">
    <location>
        <begin position="323"/>
        <end position="324"/>
    </location>
</feature>
<feature type="site" description="Cleavage; by autolysis" evidence="3">
    <location>
        <begin position="862"/>
        <end position="863"/>
    </location>
</feature>
<feature type="site" description="Cleavage; by protease 3C" evidence="3">
    <location>
        <begin position="1012"/>
        <end position="1013"/>
    </location>
</feature>
<feature type="site" description="Cleavage; by protease 3C" evidence="3">
    <location>
        <begin position="1111"/>
        <end position="1112"/>
    </location>
</feature>
<feature type="site" description="Involved in the interaction with host RTN3" evidence="13">
    <location>
        <position position="1136"/>
    </location>
</feature>
<feature type="site" description="Cleavage; by protease 3C" evidence="3">
    <location>
        <begin position="1440"/>
        <end position="1441"/>
    </location>
</feature>
<feature type="site" description="Cleavage; by protease 3C" evidence="3">
    <location>
        <begin position="1526"/>
        <end position="1527"/>
    </location>
</feature>
<feature type="site" description="Cleavage; by protease 3C" evidence="3">
    <location>
        <begin position="1548"/>
        <end position="1549"/>
    </location>
</feature>
<feature type="site" description="Cleavage; by protease 3C" evidence="3">
    <location>
        <begin position="1731"/>
        <end position="1732"/>
    </location>
</feature>
<feature type="modified residue" description="O-(5'-phospho-RNA)-tyrosine" evidence="2">
    <location>
        <position position="1529"/>
    </location>
</feature>
<feature type="lipid moiety-binding region" description="N-myristoyl glycine; by host" evidence="2">
    <location>
        <position position="2"/>
    </location>
</feature>
<feature type="mutagenesis site" description="Lethal." evidence="25">
    <original>KS</original>
    <variation>FK</variation>
    <location>
        <begin position="69"/>
        <end position="70"/>
    </location>
</feature>
<feature type="mutagenesis site" description="Lethal." evidence="25">
    <original>KS</original>
    <variation>TP</variation>
    <location>
        <begin position="69"/>
        <end position="70"/>
    </location>
</feature>
<feature type="mutagenesis site" description="No effect on VP0 cleavage and viral infectivity." evidence="25">
    <original>K</original>
    <variation>P</variation>
    <location>
        <position position="69"/>
    </location>
</feature>
<feature type="mutagenesis site" description="No effect on VP0 cleavage and viral infectivity." evidence="25">
    <original>K</original>
    <variation>T</variation>
    <location>
        <position position="69"/>
    </location>
</feature>
<feature type="mutagenesis site" description="Lethal." evidence="25">
    <original>S</original>
    <variation>A</variation>
    <location>
        <position position="70"/>
    </location>
</feature>
<feature type="mutagenesis site" description="Lethal." evidence="25">
    <original>S</original>
    <variation>T</variation>
    <location>
        <position position="70"/>
    </location>
</feature>
<feature type="mutagenesis site" description="Complete loss of cleavage of host MAVS." evidence="21">
    <original>C</original>
    <variation>A</variation>
    <location>
        <position position="972"/>
    </location>
</feature>
<feature type="mutagenesis site" description="No effect on the interaction with RTN3; when associated with V-1130." evidence="13">
    <original>D</original>
    <variation>V</variation>
    <location>
        <position position="1121"/>
    </location>
</feature>
<feature type="mutagenesis site" description="No effect on the interaction with RTN3; when associated with T-1135." evidence="13">
    <original>K</original>
    <variation>T</variation>
    <location>
        <position position="1127"/>
    </location>
</feature>
<feature type="mutagenesis site" description="No effect on the interaction with RTN3; when associated with E-1121." evidence="13">
    <original>E</original>
    <variation>V</variation>
    <location>
        <position position="1130"/>
    </location>
</feature>
<feature type="mutagenesis site" description="No effect on the interaction with RTN3; when associated with T-1127." evidence="13">
    <original>K</original>
    <variation>T</variation>
    <location>
        <position position="1135"/>
    </location>
</feature>
<feature type="mutagenesis site" description="Loss of interaction with RTN3 and reduced viral cytopathicity." evidence="13">
    <original>I</original>
    <variation>K</variation>
    <location>
        <position position="1136"/>
    </location>
</feature>
<feature type="mutagenesis site" description="Complete loss of RIGI inhibition. Complete loss of cleavage of host GSDMD and IRF7." evidence="14 22">
    <original>H</original>
    <variation>D</variation>
    <location>
        <position position="1588"/>
    </location>
</feature>
<feature type="mutagenesis site" description="No effect on the ability to mediate RIGI inhibition. No effect on the ability to cleave host GSDMD and IRF7." evidence="14 22">
    <original>R</original>
    <variation>Q</variation>
    <location>
        <position position="1632"/>
    </location>
</feature>
<feature type="mutagenesis site" description="Complete loss of the ability to cleave host GSDMD and PINX1." evidence="19 22">
    <original>C</original>
    <variation>S</variation>
    <location>
        <position position="1695"/>
    </location>
</feature>
<feature type="mutagenesis site" description="No effect on the ability to cleave host PML." evidence="29">
    <original>V</original>
    <variation>Q</variation>
    <location>
        <position position="1702"/>
    </location>
</feature>
<feature type="mutagenesis site" description="No effect on the ability to mediate RIGI inhibition. No effect on the ability to cleave host GSDMD and IRF7." evidence="14 22">
    <original>V</original>
    <variation>S</variation>
    <location>
        <position position="1702"/>
    </location>
</feature>
<feature type="mutagenesis site" description="Loss of host PPP1R15A translation activation." evidence="30">
    <original>Y</original>
    <variation>S</variation>
    <location>
        <position position="1989"/>
    </location>
</feature>
<protein>
    <recommendedName>
        <fullName>Genome polyprotein</fullName>
    </recommendedName>
    <component>
        <recommendedName>
            <fullName>P1</fullName>
        </recommendedName>
    </component>
    <component>
        <recommendedName>
            <fullName>Capsid protein VP0</fullName>
        </recommendedName>
        <alternativeName>
            <fullName>VP4-VP2</fullName>
        </alternativeName>
    </component>
    <component>
        <recommendedName>
            <fullName>Capsid protein VP4</fullName>
        </recommendedName>
        <alternativeName>
            <fullName>P1A</fullName>
        </alternativeName>
        <alternativeName>
            <fullName>Virion protein 4</fullName>
        </alternativeName>
    </component>
    <component>
        <recommendedName>
            <fullName>Capsid protein VP2</fullName>
        </recommendedName>
        <alternativeName>
            <fullName>P1B</fullName>
        </alternativeName>
        <alternativeName>
            <fullName>Virion protein 2</fullName>
        </alternativeName>
    </component>
    <component>
        <recommendedName>
            <fullName>Capsid protein VP3</fullName>
        </recommendedName>
        <alternativeName>
            <fullName>P1C</fullName>
        </alternativeName>
        <alternativeName>
            <fullName>Virion protein 3</fullName>
        </alternativeName>
    </component>
    <component>
        <recommendedName>
            <fullName>Capsid protein VP1</fullName>
        </recommendedName>
        <alternativeName>
            <fullName>P1D</fullName>
        </alternativeName>
        <alternativeName>
            <fullName>Virion protein 1</fullName>
        </alternativeName>
    </component>
    <component>
        <recommendedName>
            <fullName>P2</fullName>
        </recommendedName>
    </component>
    <component>
        <recommendedName>
            <fullName>Protease 2A</fullName>
            <shortName>P2A</shortName>
            <ecNumber evidence="2">3.4.22.29</ecNumber>
        </recommendedName>
        <alternativeName>
            <fullName>Picornain 2A</fullName>
        </alternativeName>
        <alternativeName>
            <fullName>Protein 2A</fullName>
        </alternativeName>
    </component>
    <component>
        <recommendedName>
            <fullName>Protein 2B</fullName>
            <shortName>P2B</shortName>
        </recommendedName>
    </component>
    <component>
        <recommendedName>
            <fullName>Protein 2C</fullName>
            <shortName>P2C</shortName>
            <ecNumber evidence="2">3.6.1.15</ecNumber>
        </recommendedName>
    </component>
    <component>
        <recommendedName>
            <fullName>P3</fullName>
        </recommendedName>
    </component>
    <component>
        <recommendedName>
            <fullName>Protein 3AB</fullName>
        </recommendedName>
    </component>
    <component>
        <recommendedName>
            <fullName>Protein 3A</fullName>
            <shortName>P3A</shortName>
        </recommendedName>
    </component>
    <component>
        <recommendedName>
            <fullName>Viral protein genome-linked</fullName>
            <shortName>VPg</shortName>
        </recommendedName>
        <alternativeName>
            <fullName>Protein 3B</fullName>
            <shortName>P3B</shortName>
        </alternativeName>
    </component>
    <component>
        <recommendedName>
            <fullName>Protein 3CD</fullName>
            <ecNumber>3.4.22.28</ecNumber>
        </recommendedName>
    </component>
    <component>
        <recommendedName>
            <fullName evidence="11">Protease 3C</fullName>
            <ecNumber evidence="11">3.4.22.28</ecNumber>
        </recommendedName>
        <alternativeName>
            <fullName evidence="11">Picornain 3C</fullName>
            <shortName evidence="11">P3C</shortName>
        </alternativeName>
    </component>
    <component>
        <recommendedName>
            <fullName evidence="9">RNA-directed RNA polymerase</fullName>
            <shortName>RdRp</shortName>
            <ecNumber evidence="9">2.7.7.48</ecNumber>
        </recommendedName>
        <alternativeName>
            <fullName>3D polymerase</fullName>
            <shortName>3Dpol</shortName>
        </alternativeName>
        <alternativeName>
            <fullName>Protein 3D</fullName>
            <shortName>3D</shortName>
        </alternativeName>
    </component>
</protein>
<name>POLG_HE71B</name>
<organism>
    <name type="scientific">Human enterovirus 71 (strain USA/BrCr/1970)</name>
    <name type="common">EV71</name>
    <name type="synonym">EV-71</name>
    <dbReference type="NCBI Taxonomy" id="69153"/>
    <lineage>
        <taxon>Viruses</taxon>
        <taxon>Riboviria</taxon>
        <taxon>Orthornavirae</taxon>
        <taxon>Pisuviricota</taxon>
        <taxon>Pisoniviricetes</taxon>
        <taxon>Picornavirales</taxon>
        <taxon>Picornaviridae</taxon>
        <taxon>Ensavirinae</taxon>
        <taxon>Enterovirus</taxon>
        <taxon>Enterovirus A</taxon>
    </lineage>
</organism>
<organismHost>
    <name type="scientific">Homo sapiens</name>
    <name type="common">Human</name>
    <dbReference type="NCBI Taxonomy" id="9606"/>
</organismHost>
<sequence>MGSQVSTQRSGSHENSNSATEGSTINYTTINYYKDSYAATAGKQSLKQDPDKFANPVKDIFTEMAAPLKSPSAEACGYSDRVAQLTIGNSTITTQEAANIIVGYGEWPSYCSDNDATAVDKPTRPDVSVNRFYTLDTKLWEKSSKGWYWKFPDVLTETGVFGPNAQFHYLYRSGFCIHVQCNASKFHQGALLVAVLPEYVIGTVAGGTGTENSHPPYKQTQPGADGFELQHPYVLDAGIPISQLTVCPHQWINLRTNNCATIIVPYMNTLPFDSALNHCNFGLLVVPISPLDFDQGATPVIPITITLAPMCSEFAGLRQAVTQGFPTELKPGTNQFLTTDDGVSAPILPNFHPTPCIHIPGEVRNLLELCQVETILEVNNVPTNATSLMERLRFPVSAQAGKGELCAVFRADPGRDGPWQSTMLGQLCGYYTQWSGSLEVTFMFTGSFMATGKMLIAYTPPGGPLPKDRATAMLGTHVIWDFGLQSSVTLVIPWISNTHYRAHARDGVFDYYTTGLVSIWYQTNYVVPIGAPNTAYIIALAAAQKNFTMKLCKDTSDILETATIQGDRVADVIESSIGDSVSKALTPALPAPTGPDTQVSSHRLDTGKVPALQAAEIGASSNASDESMIETRCVLNSHSTAETTLDSFFSRAGLVGEIDLPLKGTTNPNGYANWDIDITGYAQMRRKVELFTYMRFDAEFTFVACTPTGRVVPQLLQYMFVPPGAPKPDSRDSLAWPTATNPSVFVKSSDPPAQVSVPFMSPASAYQWFYDGYPTFGEHKQEKDLEYGACPNNMMGTFSVRTVGSSKSEYSLVIRIYMRMKHVRAWIPRPMRNQNYLFKSNPNYAGDSIKPTGTSRTAITTLGKFGQQSGAIYVGNFRVVNRHLATHTDWANLVWEDSSRDLLVSSTTAQGCDTIARCNCQTGVYYCNSRRKHYPVSFSKPSLVFVEASEYYPARYQSHLMLAEGHSEPGDCGGILRCQHGVVGIVSTGGSGLVGFADVRDLLWLDEEAMEQGVSDYIKGLGRAFGTGFTDAVSREVEALKNHLIGSEGAVEKILKNLVKLISALVIVIRSDYDMVTLTATLALIGCHGSPWAWIKSKTASILGIPMAQKQSASWLKKFNDMANAAKGLEWIFNKISKFIDWLKEKIIPAAKEKVEFLNNLKQLPLLENQVSNLEQSAASQEDLEAMFGNVIYLAHFCRKFQPLYATEAKRVYALEKRMNNYMQFKSKHRIEPVCLIIRGSPGTGKSLATGIIARAIADKYRSSVYSLPPDPDHFDGYKQQVVAVMDDLCQNPDGKDMSLFCQMVSTVDFVPPMASLEEKGVSFTSKFVIASTNASNIIVPTVSDSDAIRRRFYMDCDIEVTDSYKTDLGRLDAGRAAKLCTENNTANFKRCSPLVCGKAIQLRDRKSKVRYSVDTVVSELIREYNNRSAIGNTIEALFQGPPKFRPIRISLEEKPAPDAISDLLASVDSEEVRQYCREQGWIIPETPTNVERHLNRAVLVMQSIATVVAVVSLVYVIYKLFAGFQGAYSGAPKPILKKPVLRTATVQGPSLDFALSLLRRNIRQAQTDQGHFTMLGVRDRLAILPRHSQPGKTIWVEHKLINVLDAVELVDEQGVNLELTLVTLDTNEKFRDITKCIPEVITGASDATLVINTEHIPSMFVPVGDVVQYGFLNLSGKPTHRTMMYNFPTKPGQCGGVVTSVGKIIGIHIGGNGRQAFCAGLKRSYFASEQGEIQWMKPNRETGRLNINGPTRTKLEPSVFHDVFEGNKEPAVLTSKDPRLEVDFEQALFSKYVGNTLHEPDEYVTQAALHYANQLKQLDINTSKMSMEEACYGTEYLEAIDLHTSAGYPYSALGIKKRDILDPVTRDTSRMKLYMDKYGLDLPNSTYVKDELSSLDKIRKGESRLIEASSLNDPVYPRLTFGHLYEVFHANPGTVTGSAVGCNPDVFWSKLPILLPGSLFAFDYSGYDASLSPVWFRALELVLREIGYSEEAVSLIEGINHTHHVYRNKTYCVLGGMPSGCSGTSIFNSMINNIIIRTLLIKTFKGIDLDELKMVAYGDDVLASYPFPIDCLEWGKTGKEYGLTMTPADKSPCFNEVTWENATFLKRGFLPDHQFPFLIHPTMPMREIHESIRWTKDARNTQDHVRSLCLLAWHNGKEEYEKFVSTIRSVPIGRALAIPNLENLRRNWLELF</sequence>
<reference key="1">
    <citation type="journal article" date="1995" name="Virus Res.">
        <title>Complete nucleotide sequence of enterovirus 71 is distinct from poliovirus.</title>
        <authorList>
            <person name="Brown B.A."/>
            <person name="Pallansch M.A."/>
        </authorList>
    </citation>
    <scope>NUCLEOTIDE SEQUENCE [GENOMIC RNA]</scope>
</reference>
<reference key="2">
    <citation type="journal article" date="2007" name="J. Biol. Chem.">
        <title>Reticulon 3 binds the 2C protein of enterovirus 71 and is required for viral replication.</title>
        <authorList>
            <person name="Tang W.-F."/>
            <person name="Yang S.-Y."/>
            <person name="Wu B.-W."/>
            <person name="Jheng J.-R."/>
            <person name="Chen Y.-L."/>
            <person name="Shih C.-H."/>
            <person name="Lin K.-H."/>
            <person name="Lai H.-C."/>
            <person name="Tang P."/>
            <person name="Horng J.-T."/>
        </authorList>
    </citation>
    <scope>INTERACTION WITH HOST RTN3 (PROTEIN 2C)</scope>
    <scope>MUTAGENESIS OF ASP-1121; LYS-1127; GLU-1130; LYS-1135 AND ILE-1136</scope>
</reference>
<reference key="3">
    <citation type="journal article" date="2010" name="J. Virol.">
        <title>The 3C protein of enterovirus 71 inhibits retinoid acid-inducible gene I-mediated interferon regulatory factor 3 activation and type I interferon responses.</title>
        <authorList>
            <person name="Lei X."/>
            <person name="Liu X."/>
            <person name="Ma Y."/>
            <person name="Sun Z."/>
            <person name="Yang Y."/>
            <person name="Jin Q."/>
            <person name="He B."/>
            <person name="Wang J."/>
        </authorList>
    </citation>
    <scope>INTERACTION WITH HOST RIGI (PROTEASE 3C)</scope>
    <scope>MUTAGENESIS OF HIS-1588; ARG-1632 AND VAL-1702</scope>
</reference>
<reference key="4">
    <citation type="journal article" date="2013" name="J. Virol.">
        <title>Cleavage of interferon regulatory factor 7 by enterovirus 71 3C suppresses cellular responses.</title>
        <authorList>
            <person name="Lei X."/>
            <person name="Xiao X."/>
            <person name="Xue Q."/>
            <person name="Jin Q."/>
            <person name="He B."/>
            <person name="Wang J."/>
        </authorList>
    </citation>
    <scope>FUNCTION (PROTEASE 3C)</scope>
    <scope>MUTAGENESIS OF HIS-1588; ARG-1632 AND VAL-1702</scope>
</reference>
<reference key="5">
    <citation type="journal article" date="2011" name="J. Biol. Chem.">
        <title>The essential role of clathrin-mediated endocytosis in the infectious entry of human enterovirus 71.</title>
        <authorList>
            <person name="Hussain K.M."/>
            <person name="Leong K.L."/>
            <person name="Ng M.M."/>
            <person name="Chu J.J."/>
        </authorList>
    </citation>
    <scope>FUNCTION (CAPSID PROTEIN VP1)</scope>
    <source>
        <strain>H</strain>
    </source>
</reference>
<reference key="6">
    <citation type="journal article" date="2014" name="J. Virol.">
        <title>Enterovirus 2Apro targets MDA5 and MAVS in infected cells.</title>
        <authorList>
            <person name="Feng Q."/>
            <person name="Langereis M.A."/>
            <person name="Lork M."/>
            <person name="Nguyen M."/>
            <person name="Hato S.V."/>
            <person name="Lanke K."/>
            <person name="Emdad L."/>
            <person name="Bhoopathi P."/>
            <person name="Fisher P.B."/>
            <person name="Lloyd R.E."/>
            <person name="van Kuppeveld F.J."/>
        </authorList>
    </citation>
    <scope>FUNCTION (PROTEASE 2A)</scope>
    <scope>FUNCTION (PROTEASE 3C)</scope>
</reference>
<reference key="7">
    <citation type="journal article" date="2016" name="J. Virol.">
        <title>Enterovirus 71 2B induces cell apoptosis by directly inducing the conformational activation of the proapoptotic protein Bax.</title>
        <authorList>
            <person name="Cong H."/>
            <person name="Du N."/>
            <person name="Yang Y."/>
            <person name="Song L."/>
            <person name="Zhang W."/>
            <person name="Tien P."/>
        </authorList>
    </citation>
    <scope>FUNCTION (PROTEIN 2B)</scope>
    <scope>INTERACTION WITH HOST BAX (PROTEIN 2B)</scope>
    <scope>SUBCELLULAR LOCATION (PROTEIN 2B)</scope>
</reference>
<reference key="8">
    <citation type="journal article" date="2017" name="PLoS Pathog.">
        <title>Correction: Enterovirus 71 Protease 2Apro Targets MAVS to Inhibit Anti-Viral Type I Interferon Responses.</title>
        <authorList>
            <person name="Wang B."/>
            <person name="Xi X."/>
            <person name="Lei X."/>
            <person name="Zhang X."/>
            <person name="Cui S."/>
            <person name="Wang J."/>
            <person name="Jin Q."/>
            <person name="Zhao Z."/>
        </authorList>
    </citation>
    <scope>FUNCTION (PROTEASE 2A)</scope>
    <scope>MUTAGENESIS OF CYS-972</scope>
    <source>
        <strain>Fuyang-0805</strain>
    </source>
</reference>
<reference key="9">
    <citation type="journal article" date="2017" name="PLoS Pathog.">
        <title>EV71 3D Protein Binds with NLRP3 and Enhances the Assembly of Inflammasome Complex.</title>
        <authorList>
            <person name="Wang W."/>
            <person name="Xiao F."/>
            <person name="Wan P."/>
            <person name="Pan P."/>
            <person name="Zhang Y."/>
            <person name="Liu F."/>
            <person name="Wu K."/>
            <person name="Liu Y."/>
            <person name="Wu J."/>
        </authorList>
    </citation>
    <scope>FUNCTION (PROTEIN RNA-DIRECTED RNA POLYMERASE)</scope>
    <scope>INTERACTION WITH HOST NLRP3 (PROTEIN RNA-DIRECTED RNA POLYMERASE)</scope>
    <scope>SUBCELLULAR LOCATION (PROTEIN RNA-DIRECTED RNA POLYMERASE)</scope>
</reference>
<reference key="10">
    <citation type="journal article" date="2017" name="J. Virol.">
        <title>Enterovirus 71 inhibits pyroptosis through cleavage of gasdermin D.</title>
        <authorList>
            <person name="Lei X."/>
            <person name="Zhang Z."/>
            <person name="Xiao X."/>
            <person name="Qi J."/>
            <person name="He B."/>
            <person name="Wang J."/>
        </authorList>
    </citation>
    <scope>FUNCTION (PROTEASE 3C)</scope>
    <scope>MUTAGENESIS OF HIS-1588; ARG-1632; CYS-1695 AND VAL-1702</scope>
</reference>
<reference key="11">
    <citation type="journal article" date="2017" name="J. Virol.">
        <title>Enterovirus 71 3C Promotes Apoptosis through Cleavage of PinX1, a Telomere Binding Protein.</title>
        <authorList>
            <person name="Li J."/>
            <person name="Yao Y."/>
            <person name="Chen Y."/>
            <person name="Xu X."/>
            <person name="Lin Y."/>
            <person name="Yang Z."/>
            <person name="Qiao W."/>
            <person name="Tan J."/>
        </authorList>
    </citation>
    <scope>FUNCTION (PROTEASE 3C)</scope>
    <scope>SUBCELLULAR LOCATION (PROTEASE 3C)</scope>
    <scope>MUTAGENESIS OF CYS-1695</scope>
</reference>
<reference key="12">
    <citation type="journal article" date="2018" name="Virus Res.">
        <title>Enterovirus 71 inhibits cytoplasmic stress granule formation during the late stage of infection.</title>
        <authorList>
            <person name="Zhang Y."/>
            <person name="Yao L."/>
            <person name="Xu X."/>
            <person name="Han H."/>
            <person name="Li P."/>
            <person name="Zou D."/>
            <person name="Li X."/>
            <person name="Zheng L."/>
            <person name="Cheng L."/>
            <person name="Shen Y."/>
            <person name="Wang X."/>
            <person name="Wu X."/>
            <person name="Xu J."/>
            <person name="Song B."/>
            <person name="Xu S."/>
            <person name="Zhang H."/>
            <person name="Cao H."/>
        </authorList>
    </citation>
    <scope>FUNCTION (PROTEASE 3C)</scope>
    <scope>SUBCELLULAR LOCATION (PROTEASE 3C)</scope>
    <scope>SUBCELLULAR LOCATION (CAPSID PROTEIN VP0)</scope>
    <scope>SUBCELLULAR LOCATION (CAPSID PROTEIN VP4)</scope>
    <scope>SUBCELLULAR LOCATION (CAPSID PROTEIN VP3)</scope>
    <scope>SUBCELLULAR LOCATION (CAPSID PROTEIN VP2)</scope>
    <scope>SUBCELLULAR LOCATION (CAPSID PROTEIN VP1)</scope>
    <scope>SUBCELLULAR LOCATION (PROTEASE 2A)</scope>
    <scope>SUBCELLULAR LOCATION (PROTEIN 2B)</scope>
    <scope>SUBCELLULAR LOCATION (PROTEIN 2C)</scope>
    <scope>SUBCELLULAR LOCATION (PROTEIN 3A)</scope>
    <scope>SUBCELLULAR LOCATION (VIRAL PROTEIN GENOME-LINKED)</scope>
    <scope>SUBCELLULAR LOCATION (RNA-DIRECTED RNA POLYMERASE)</scope>
</reference>
<reference key="13">
    <citation type="journal article" date="2019" name="MBio">
        <title>ACBD3 is an essential pan-enterovirus host factor that mediates the interaction between viral 3A protein and cellular protein PI4KB.</title>
        <authorList>
            <person name="Lyoo H."/>
            <person name="van der Schaar H.M."/>
            <person name="Dorobantu C.M."/>
            <person name="Rabouw H.H."/>
            <person name="Strating J.R.P.M."/>
            <person name="van Kuppeveld F.J.M."/>
        </authorList>
    </citation>
    <scope>FUNCTION (PROTEIN 3A)</scope>
</reference>
<reference key="14">
    <citation type="journal article" date="2019" name="Microb. Pathog.">
        <title>Determination of the cleavage site of enterovirus 71 VP0 and the effect of this cleavage on viral infectivity and assembly.</title>
        <authorList>
            <person name="Cao J."/>
            <person name="Liu H."/>
            <person name="Qu M."/>
            <person name="Hou A."/>
            <person name="Zhou Y."/>
            <person name="Sun B."/>
            <person name="Cai L."/>
            <person name="Gao F."/>
            <person name="Su W."/>
            <person name="Jiang C."/>
        </authorList>
    </citation>
    <scope>PROTEOLYTIC CLEAVAGE (GENOME POLYPROTEIN)</scope>
    <scope>MUTAGENESIS OF LYS-69; 69-LYS-SER-70 AND SER-70</scope>
    <source>
        <strain>BJ97</strain>
    </source>
</reference>
<reference key="15">
    <citation type="journal article" date="2019" name="PLoS ONE">
        <title>EV71 3C protease induces apoptosis by cleavage of hnRNP A1 to promote apaf-1 translation.</title>
        <authorList>
            <person name="Li M.L."/>
            <person name="Lin J.Y."/>
            <person name="Chen B.S."/>
            <person name="Weng K.F."/>
            <person name="Shih S.R."/>
            <person name="Calderon J.D."/>
            <person name="Tolbert B.S."/>
            <person name="Brewer G."/>
        </authorList>
    </citation>
    <scope>FUNCTION (PROTEASE 3C)</scope>
    <source>
        <strain>TW/2231/98</strain>
    </source>
</reference>
<reference key="16">
    <citation type="journal article" date="2019" name="J. Virol.">
        <title>Essential Role of Enterovirus 2A Protease in Counteracting Stress Granule Formation and the Induction of Type I Interferon.</title>
        <authorList>
            <person name="Visser L.J."/>
            <person name="Langereis M.A."/>
            <person name="Rabouw H.H."/>
            <person name="Wahedi M."/>
            <person name="Muntjewerff E.M."/>
            <person name="de Groot R.J."/>
            <person name="van Kuppeveld F.J.M."/>
        </authorList>
    </citation>
    <scope>FUNCTION (PROTEASE 2A)</scope>
    <scope>FUNCTION (PROTEASE 3C)</scope>
</reference>
<reference key="17">
    <citation type="journal article" date="2019" name="Viruses">
        <title>Cellular Interleukin Enhancer-Binding Factor 2, ILF2, Inhibits Japanese Encephalitis Virus Replication In Vitro.</title>
        <authorList>
            <person name="Cui X."/>
            <person name="Qian P."/>
            <person name="Rao T."/>
            <person name="Wei Y."/>
            <person name="Zhao F."/>
            <person name="Zhang H."/>
            <person name="Chen H."/>
            <person name="Li X."/>
        </authorList>
    </citation>
    <scope>INTERACTION WITH HUMAN PROTEIN ILF2 (PROTEIN 2B)</scope>
</reference>
<reference key="18">
    <citation type="journal article" date="2021" name="Elife">
        <title>Diverse viral proteases activate the NLRP1 inflammasome.</title>
        <authorList>
            <person name="Tsu B.V."/>
            <person name="Beierschmitt C."/>
            <person name="Ryan A.P."/>
            <person name="Agarwal R."/>
            <person name="Mitchell P.S."/>
            <person name="Daugherty M.D."/>
        </authorList>
    </citation>
    <scope>FUNCTION (PROTEASE 3C)</scope>
</reference>
<reference key="19">
    <citation type="journal article" date="2021" name="Virol. J.">
        <title>3C protease of enterovirus 71 cleaves promyelocytic leukemia protein and impairs PML-NBs production.</title>
        <authorList>
            <person name="Li Z."/>
            <person name="Wu Y."/>
            <person name="Li H."/>
            <person name="Li W."/>
            <person name="Tan J."/>
            <person name="Qiao W."/>
        </authorList>
    </citation>
    <scope>FUNCTION (PROTEASE 3C)</scope>
    <scope>SUBCELLULAR LOCATION (PROTEASE 3C)</scope>
    <scope>MUTAGENESIS OF VAL-1702</scope>
</reference>
<reference key="20">
    <citation type="journal article" date="2022" name="Microbiol. Spectr.">
        <title>Enterovirus 71 Activates GADD34 via Precursor 3CD to Promote IRES-Mediated Viral Translation.</title>
        <authorList>
            <person name="Li H."/>
            <person name="Li W."/>
            <person name="Zhang S."/>
            <person name="Qiu M."/>
            <person name="Li Z."/>
            <person name="Lin Y."/>
            <person name="Tan J."/>
            <person name="Qiao W."/>
        </authorList>
    </citation>
    <scope>FUNCTION (PROTEIN 3CD)</scope>
    <scope>INTERACTION WITH HOST PPP1R15A (PROTEIN 3CD)</scope>
    <scope>SUBCELLULAR LOCATION (PROTEIN 3CD)</scope>
    <scope>MUTAGENESIS OF TYR-1989</scope>
</reference>
<reference key="21">
    <citation type="journal article" date="2023" name="J. Med. Virol.">
        <title>Enterovirus 71 enters human brain microvascular endothelial cells through an ARF6-mediated endocytic pathway.</title>
        <authorList>
            <person name="Zhu Y."/>
            <person name="Wang X."/>
            <person name="He Z."/>
            <person name="Zhao P."/>
            <person name="Ren H."/>
            <person name="Qi Z."/>
        </authorList>
    </citation>
    <scope>FUNCTION (CAPSID PROTEIN VP1)</scope>
    <scope>INTERACTION WITH HOST ARF6 (CAPSID PROTEIN VP1)</scope>
    <source>
        <strain>FJ08089</strain>
    </source>
</reference>
<reference key="22">
    <citation type="journal article" date="2023" name="J. Virol.">
        <title>Ubiquitin E3 ligase SPOP is a host negative regulator of enterovirus 71-encoded 2A protease.</title>
        <authorList>
            <person name="Zang L."/>
            <person name="Yang X."/>
            <person name="Chen Y."/>
            <person name="Huang F."/>
            <person name="Yuan Y."/>
            <person name="Chen X."/>
            <person name="Zuo Y."/>
            <person name="Miao Y."/>
            <person name="Gu J."/>
            <person name="Guo H."/>
            <person name="Xia W."/>
            <person name="Peng Y."/>
            <person name="Tang M."/>
            <person name="Huang Z."/>
            <person name="Wang Y."/>
            <person name="Ma J."/>
            <person name="Jiang J."/>
            <person name="Zhou W."/>
            <person name="Zheng H."/>
            <person name="Shi W."/>
        </authorList>
    </citation>
    <scope>INTERACTION WITH HOST SPOP (PROTEASE 2A)</scope>
</reference>